<accession>B9WK07</accession>
<protein>
    <recommendedName>
        <fullName evidence="1">Mitochondrial distribution and morphology protein 12</fullName>
    </recommendedName>
    <alternativeName>
        <fullName evidence="1">Mitochondrial inheritance component MDM12</fullName>
    </alternativeName>
</protein>
<feature type="chain" id="PRO_0000384278" description="Mitochondrial distribution and morphology protein 12">
    <location>
        <begin position="1"/>
        <end position="422"/>
    </location>
</feature>
<feature type="domain" description="SMP-LTD" evidence="1">
    <location>
        <begin position="1"/>
        <end position="386"/>
    </location>
</feature>
<feature type="region of interest" description="Disordered" evidence="2">
    <location>
        <begin position="74"/>
        <end position="134"/>
    </location>
</feature>
<feature type="region of interest" description="Disordered" evidence="2">
    <location>
        <begin position="387"/>
        <end position="422"/>
    </location>
</feature>
<feature type="compositionally biased region" description="Acidic residues" evidence="2">
    <location>
        <begin position="109"/>
        <end position="130"/>
    </location>
</feature>
<feature type="compositionally biased region" description="Acidic residues" evidence="2">
    <location>
        <begin position="387"/>
        <end position="401"/>
    </location>
</feature>
<feature type="compositionally biased region" description="Basic and acidic residues" evidence="2">
    <location>
        <begin position="405"/>
        <end position="422"/>
    </location>
</feature>
<name>MDM12_CANDC</name>
<proteinExistence type="inferred from homology"/>
<dbReference type="EMBL" id="FM992694">
    <property type="protein sequence ID" value="CAX40658.1"/>
    <property type="molecule type" value="Genomic_DNA"/>
</dbReference>
<dbReference type="RefSeq" id="XP_002421324.1">
    <property type="nucleotide sequence ID" value="XM_002421279.1"/>
</dbReference>
<dbReference type="SMR" id="B9WK07"/>
<dbReference type="GeneID" id="8049291"/>
<dbReference type="KEGG" id="cdu:CD36_71040"/>
<dbReference type="CGD" id="CAL0000170981">
    <property type="gene designation" value="Cd36_71040"/>
</dbReference>
<dbReference type="VEuPathDB" id="FungiDB:CD36_71040"/>
<dbReference type="eggNOG" id="ENOG502S3PB">
    <property type="taxonomic scope" value="Eukaryota"/>
</dbReference>
<dbReference type="HOGENOM" id="CLU_026794_2_0_1"/>
<dbReference type="OrthoDB" id="3356905at2759"/>
<dbReference type="Proteomes" id="UP000002605">
    <property type="component" value="Chromosome 7"/>
</dbReference>
<dbReference type="GO" id="GO:0005789">
    <property type="term" value="C:endoplasmic reticulum membrane"/>
    <property type="evidence" value="ECO:0007669"/>
    <property type="project" value="UniProtKB-SubCell"/>
</dbReference>
<dbReference type="GO" id="GO:0032865">
    <property type="term" value="C:ERMES complex"/>
    <property type="evidence" value="ECO:0007669"/>
    <property type="project" value="UniProtKB-UniRule"/>
</dbReference>
<dbReference type="GO" id="GO:0008289">
    <property type="term" value="F:lipid binding"/>
    <property type="evidence" value="ECO:0007669"/>
    <property type="project" value="UniProtKB-KW"/>
</dbReference>
<dbReference type="GO" id="GO:0000002">
    <property type="term" value="P:mitochondrial genome maintenance"/>
    <property type="evidence" value="ECO:0007669"/>
    <property type="project" value="UniProtKB-UniRule"/>
</dbReference>
<dbReference type="GO" id="GO:1990456">
    <property type="term" value="P:mitochondrion-endoplasmic reticulum membrane tethering"/>
    <property type="evidence" value="ECO:0007669"/>
    <property type="project" value="TreeGrafter"/>
</dbReference>
<dbReference type="GO" id="GO:0015914">
    <property type="term" value="P:phospholipid transport"/>
    <property type="evidence" value="ECO:0007669"/>
    <property type="project" value="TreeGrafter"/>
</dbReference>
<dbReference type="GO" id="GO:0045040">
    <property type="term" value="P:protein insertion into mitochondrial outer membrane"/>
    <property type="evidence" value="ECO:0007669"/>
    <property type="project" value="UniProtKB-UniRule"/>
</dbReference>
<dbReference type="CDD" id="cd21672">
    <property type="entry name" value="SMP_Mdm12"/>
    <property type="match status" value="1"/>
</dbReference>
<dbReference type="HAMAP" id="MF_03104">
    <property type="entry name" value="Mdm12"/>
    <property type="match status" value="1"/>
</dbReference>
<dbReference type="InterPro" id="IPR027532">
    <property type="entry name" value="Mdm12"/>
</dbReference>
<dbReference type="InterPro" id="IPR031468">
    <property type="entry name" value="SMP_LBD"/>
</dbReference>
<dbReference type="PANTHER" id="PTHR28204">
    <property type="entry name" value="MITOCHONDRIAL DISTRIBUTION AND MORPHOLOGY PROTEIN 12"/>
    <property type="match status" value="1"/>
</dbReference>
<dbReference type="PANTHER" id="PTHR28204:SF1">
    <property type="entry name" value="MITOCHONDRIAL DISTRIBUTION AND MORPHOLOGY PROTEIN 12"/>
    <property type="match status" value="1"/>
</dbReference>
<dbReference type="PROSITE" id="PS51847">
    <property type="entry name" value="SMP"/>
    <property type="match status" value="1"/>
</dbReference>
<comment type="function">
    <text evidence="1">Component of the ERMES/MDM complex, which serves as a molecular tether to connect the endoplasmic reticulum (ER) and mitochondria. Components of this complex are involved in the control of mitochondrial shape and protein biogenesis, and function in nonvesicular lipid trafficking between the ER and mitochondria. MDM12 is required for the interaction of the ER-resident membrane protein MMM1 and the outer mitochondrial membrane-resident beta-barrel protein MDM10. The MDM12-MMM1 subcomplex functions in the major beta-barrel assembly pathway that is responsible for biogenesis of all mitochondrial outer membrane beta-barrel proteins, and acts in a late step after the SAM complex. The MDM10-MDM12-MMM1 subcomplex further acts in the TOM40-specific pathway after the action of the MDM12-MMM1 complex. Essential for establishing and maintaining the structure of mitochondria and maintenance of mtDNA nucleoids.</text>
</comment>
<comment type="subunit">
    <text evidence="1">Component of the ER-mitochondria encounter structure (ERMES) or MDM complex, composed of MMM1, MDM10, MDM12 and MDM34. A MMM1 homodimer associates with one molecule of MDM12 on each side in a pairwise head-to-tail manner, and the SMP-LTD domains of MMM1 and MDM12 generate a continuous hydrophobic tunnel for phospholipid trafficking.</text>
</comment>
<comment type="subcellular location">
    <subcellularLocation>
        <location evidence="1">Mitochondrion outer membrane</location>
        <topology evidence="1">Peripheral membrane protein</topology>
        <orientation evidence="1">Cytoplasmic side</orientation>
    </subcellularLocation>
    <subcellularLocation>
        <location evidence="1">Endoplasmic reticulum membrane</location>
        <topology evidence="1">Peripheral membrane protein</topology>
        <orientation evidence="1">Cytoplasmic side</orientation>
    </subcellularLocation>
    <text evidence="1">The ERMES/MDM complex localizes to a few discrete foci (around 10 per single cell), that represent mitochondria-endoplasmic reticulum junctions. These foci are often found next to mtDNA nucleoids.</text>
</comment>
<comment type="domain">
    <text evidence="1">The SMP-LTD domain is a barrel-like domain that can bind various types of glycerophospholipids in its interior and mediate their transfer between two adjacent bilayers.</text>
</comment>
<comment type="similarity">
    <text evidence="1">Belongs to the MDM12 family.</text>
</comment>
<sequence length="422" mass="47136">MSFDINWNQLTIDDTINQSIKEFLDQQFKKISLPSFISNLSVTDFNLGEIPPEITIRHIGDPFEEFYEDEDNLGATNETNHNLNDERSTMGKSQENGIHKDNAYNSQNFDDDDDDDEGVDEDDDDDEYDDHDLGTINEGISLLNFNDSSTTPSGNSFGGSIAPLPPPPLNPSRDSFHSILHPYGVNSIIGATGAGSETPTNILNQNYLSSRVLPKISVKQKQPHHDDNDIQLIVEINYKGDMHINLLVNLLVNYPSPNFISLPIKLHITDIVIHSIATIAYLKKSVYLSFLCDVDDAFPDFDSNNNAQTPTSTTGGNFVDYYSNDAAINKERIDIVKKIKIESEIGEVENNILRNVGKVEKFLVEQLRNILRDEIAWPSWICIDMNDDGDDDDDDEVEDSNVSDGDGKDNDGKHGDGPTHEV</sequence>
<evidence type="ECO:0000255" key="1">
    <source>
        <dbReference type="HAMAP-Rule" id="MF_03104"/>
    </source>
</evidence>
<evidence type="ECO:0000256" key="2">
    <source>
        <dbReference type="SAM" id="MobiDB-lite"/>
    </source>
</evidence>
<keyword id="KW-0256">Endoplasmic reticulum</keyword>
<keyword id="KW-0445">Lipid transport</keyword>
<keyword id="KW-0446">Lipid-binding</keyword>
<keyword id="KW-0472">Membrane</keyword>
<keyword id="KW-0496">Mitochondrion</keyword>
<keyword id="KW-1000">Mitochondrion outer membrane</keyword>
<keyword id="KW-0813">Transport</keyword>
<organism>
    <name type="scientific">Candida dubliniensis (strain CD36 / ATCC MYA-646 / CBS 7987 / NCPF 3949 / NRRL Y-17841)</name>
    <name type="common">Yeast</name>
    <dbReference type="NCBI Taxonomy" id="573826"/>
    <lineage>
        <taxon>Eukaryota</taxon>
        <taxon>Fungi</taxon>
        <taxon>Dikarya</taxon>
        <taxon>Ascomycota</taxon>
        <taxon>Saccharomycotina</taxon>
        <taxon>Pichiomycetes</taxon>
        <taxon>Debaryomycetaceae</taxon>
        <taxon>Candida/Lodderomyces clade</taxon>
        <taxon>Candida</taxon>
    </lineage>
</organism>
<gene>
    <name evidence="1" type="primary">MDM12</name>
    <name type="ORF">CD36_71040</name>
</gene>
<reference key="1">
    <citation type="journal article" date="2009" name="Genome Res.">
        <title>Comparative genomics of the fungal pathogens Candida dubliniensis and Candida albicans.</title>
        <authorList>
            <person name="Jackson A.P."/>
            <person name="Gamble J.A."/>
            <person name="Yeomans T."/>
            <person name="Moran G.P."/>
            <person name="Saunders D."/>
            <person name="Harris D."/>
            <person name="Aslett M."/>
            <person name="Barrell J.F."/>
            <person name="Butler G."/>
            <person name="Citiulo F."/>
            <person name="Coleman D.C."/>
            <person name="de Groot P.W.J."/>
            <person name="Goodwin T.J."/>
            <person name="Quail M.A."/>
            <person name="McQuillan J."/>
            <person name="Munro C.A."/>
            <person name="Pain A."/>
            <person name="Poulter R.T."/>
            <person name="Rajandream M.A."/>
            <person name="Renauld H."/>
            <person name="Spiering M.J."/>
            <person name="Tivey A."/>
            <person name="Gow N.A.R."/>
            <person name="Barrell B."/>
            <person name="Sullivan D.J."/>
            <person name="Berriman M."/>
        </authorList>
    </citation>
    <scope>NUCLEOTIDE SEQUENCE [LARGE SCALE GENOMIC DNA]</scope>
    <source>
        <strain>CD36 / ATCC MYA-646 / CBS 7987 / NCPF 3949 / NRRL Y-17841</strain>
    </source>
</reference>